<dbReference type="EC" id="6.1.1.4"/>
<dbReference type="EMBL" id="ABGB01000015">
    <property type="protein sequence ID" value="EED44543.1"/>
    <property type="molecule type" value="Genomic_DNA"/>
</dbReference>
<dbReference type="RefSeq" id="XP_002649524.1">
    <property type="nucleotide sequence ID" value="XM_002649478.1"/>
</dbReference>
<dbReference type="SMR" id="B7XHP6"/>
<dbReference type="FunCoup" id="B7XHP6">
    <property type="interactions" value="324"/>
</dbReference>
<dbReference type="STRING" id="481877.B7XHP6"/>
<dbReference type="VEuPathDB" id="MicrosporidiaDB:EBI_21702"/>
<dbReference type="HOGENOM" id="CLU_004174_0_0_1"/>
<dbReference type="InParanoid" id="B7XHP6"/>
<dbReference type="OMA" id="RMCLAVC"/>
<dbReference type="OrthoDB" id="10249672at2759"/>
<dbReference type="GO" id="GO:0005737">
    <property type="term" value="C:cytoplasm"/>
    <property type="evidence" value="ECO:0007669"/>
    <property type="project" value="UniProtKB-SubCell"/>
</dbReference>
<dbReference type="GO" id="GO:0005524">
    <property type="term" value="F:ATP binding"/>
    <property type="evidence" value="ECO:0007669"/>
    <property type="project" value="UniProtKB-KW"/>
</dbReference>
<dbReference type="GO" id="GO:0004823">
    <property type="term" value="F:leucine-tRNA ligase activity"/>
    <property type="evidence" value="ECO:0007669"/>
    <property type="project" value="UniProtKB-EC"/>
</dbReference>
<dbReference type="GO" id="GO:0006429">
    <property type="term" value="P:leucyl-tRNA aminoacylation"/>
    <property type="evidence" value="ECO:0007669"/>
    <property type="project" value="InterPro"/>
</dbReference>
<dbReference type="CDD" id="cd00812">
    <property type="entry name" value="LeuRS_core"/>
    <property type="match status" value="1"/>
</dbReference>
<dbReference type="Gene3D" id="3.40.50.620">
    <property type="entry name" value="HUPs"/>
    <property type="match status" value="2"/>
</dbReference>
<dbReference type="InterPro" id="IPR001412">
    <property type="entry name" value="aa-tRNA-synth_I_CS"/>
</dbReference>
<dbReference type="InterPro" id="IPR002300">
    <property type="entry name" value="aa-tRNA-synth_Ia"/>
</dbReference>
<dbReference type="InterPro" id="IPR004493">
    <property type="entry name" value="Leu-tRNA-synth_Ia_arc/euk"/>
</dbReference>
<dbReference type="InterPro" id="IPR015413">
    <property type="entry name" value="Methionyl/Leucyl_tRNA_Synth"/>
</dbReference>
<dbReference type="InterPro" id="IPR014729">
    <property type="entry name" value="Rossmann-like_a/b/a_fold"/>
</dbReference>
<dbReference type="PANTHER" id="PTHR45794:SF1">
    <property type="entry name" value="LEUCINE--TRNA LIGASE, CYTOPLASMIC"/>
    <property type="match status" value="1"/>
</dbReference>
<dbReference type="PANTHER" id="PTHR45794">
    <property type="entry name" value="LEUCYL-TRNA SYNTHETASE"/>
    <property type="match status" value="1"/>
</dbReference>
<dbReference type="Pfam" id="PF00133">
    <property type="entry name" value="tRNA-synt_1"/>
    <property type="match status" value="1"/>
</dbReference>
<dbReference type="Pfam" id="PF09334">
    <property type="entry name" value="tRNA-synt_1g"/>
    <property type="match status" value="1"/>
</dbReference>
<dbReference type="SUPFAM" id="SSF52374">
    <property type="entry name" value="Nucleotidylyl transferase"/>
    <property type="match status" value="1"/>
</dbReference>
<dbReference type="PROSITE" id="PS00178">
    <property type="entry name" value="AA_TRNA_LIGASE_I"/>
    <property type="match status" value="1"/>
</dbReference>
<protein>
    <recommendedName>
        <fullName>Probable leucine--tRNA ligase, cytoplasmic</fullName>
        <ecNumber>6.1.1.4</ecNumber>
    </recommendedName>
    <alternativeName>
        <fullName>Leucyl-tRNA synthetase</fullName>
        <shortName>LeuRS</shortName>
    </alternativeName>
</protein>
<gene>
    <name type="ORF">EBI_21702</name>
</gene>
<organism>
    <name type="scientific">Enterocytozoon bieneusi (strain H348)</name>
    <name type="common">Microsporidian parasite</name>
    <dbReference type="NCBI Taxonomy" id="481877"/>
    <lineage>
        <taxon>Eukaryota</taxon>
        <taxon>Fungi</taxon>
        <taxon>Fungi incertae sedis</taxon>
        <taxon>Microsporidia</taxon>
        <taxon>Enterocytozoonidae</taxon>
        <taxon>Enterocytozoon</taxon>
    </lineage>
</organism>
<comment type="catalytic activity">
    <reaction>
        <text>tRNA(Leu) + L-leucine + ATP = L-leucyl-tRNA(Leu) + AMP + diphosphate</text>
        <dbReference type="Rhea" id="RHEA:11688"/>
        <dbReference type="Rhea" id="RHEA-COMP:9613"/>
        <dbReference type="Rhea" id="RHEA-COMP:9622"/>
        <dbReference type="ChEBI" id="CHEBI:30616"/>
        <dbReference type="ChEBI" id="CHEBI:33019"/>
        <dbReference type="ChEBI" id="CHEBI:57427"/>
        <dbReference type="ChEBI" id="CHEBI:78442"/>
        <dbReference type="ChEBI" id="CHEBI:78494"/>
        <dbReference type="ChEBI" id="CHEBI:456215"/>
        <dbReference type="EC" id="6.1.1.4"/>
    </reaction>
</comment>
<comment type="subcellular location">
    <subcellularLocation>
        <location evidence="1">Cytoplasm</location>
    </subcellularLocation>
</comment>
<comment type="similarity">
    <text evidence="2">Belongs to the class-I aminoacyl-tRNA synthetase family.</text>
</comment>
<name>SYLC_ENTBH</name>
<keyword id="KW-0030">Aminoacyl-tRNA synthetase</keyword>
<keyword id="KW-0067">ATP-binding</keyword>
<keyword id="KW-0963">Cytoplasm</keyword>
<keyword id="KW-0436">Ligase</keyword>
<keyword id="KW-0547">Nucleotide-binding</keyword>
<keyword id="KW-0648">Protein biosynthesis</keyword>
<sequence length="860" mass="100606">MSENNTKLKYLCDLEEKGRRQCMESEILVDKKKFFITFPYPYMNGKLHLGHLFSISKADIFSYYKEMQGFNVLFPFGFHCTGMPISASAKKLKMELANEGEIDISVVNILKSLGFKLYCSGKCTNVECICQFTDPFHWCRTFPKYCKASLVKYDANIDWRRSFITTDVNPYYDSFVKYQFTKLKNCNYISFGKRYSIFCPVDNQICLDHDRRKGEGVKPIPIVLAILGNNILVPVQEKDLNTIIDNNVEIVTQKEIQWIQFSINNDVYVAEEDIYNNIKYQVENVYKIKTVTLDGLYPYIIYVNSNIRKSKINNKNKILTENIYNKLIADRHEKMELIKYDKFIVCYVPEDTVISRSGGKCTVALMDQWFLDYSNPEWKEKTKICLNKLTASKDTKEKLELALNWINKWGFSRNFGLGTKFPYDNSVLIDSLSDSTIYMAFYTVKHLLFKDLEGKEPLFPIKYMGYAFWEYVFGNSNEINFIDPNDLNAKKIVEDARSQFNYFYPIDLRVSGKDLINNHLIFFLMNHVAIFKENNWPKRIYTNGHLLLNGLKMSKSEGNFLSVDTALERFGTSATRMCLAICGDTNEDANFVESMANSFVLKLYTLSQNIFLISSNNQSVNVADYTLIDYYLISSIKINEEKTFTSYENIVYRDVIKYGFYNNLDTIETYEMFGGSNSNLKHWAYYNMMKQLYPVIPSLARYFLNEVLTDISIEFKNIINQQYISGIEYIKELIHKINKFTKHDAKKVNLTLIKHYPPWKELCMKKIDELKLIHKNNNDLKKIVLKECSQFIGENNRKKGILFCMDYLLYKEKYIINFDEELYTNTFKSIIEQETKKKIIILIKDDSTKGEPLCPEINSC</sequence>
<feature type="chain" id="PRO_0000388414" description="Probable leucine--tRNA ligase, cytoplasmic">
    <location>
        <begin position="1"/>
        <end position="860"/>
    </location>
</feature>
<feature type="short sequence motif" description="'HIGH' region" evidence="1">
    <location>
        <begin position="41"/>
        <end position="51"/>
    </location>
</feature>
<feature type="short sequence motif" description="'KMSKS' region" evidence="1">
    <location>
        <begin position="552"/>
        <end position="556"/>
    </location>
</feature>
<feature type="binding site" evidence="1">
    <location>
        <position position="555"/>
    </location>
    <ligand>
        <name>ATP</name>
        <dbReference type="ChEBI" id="CHEBI:30616"/>
    </ligand>
</feature>
<reference key="1">
    <citation type="journal article" date="2007" name="PLoS ONE">
        <title>Patterns of genome evolution among the microsporidian parasites Encephalitozoon cuniculi, Antonospora locustae and Enterocytozoon bieneusi.</title>
        <authorList>
            <person name="Corradi N."/>
            <person name="Akiyoshi D.E."/>
            <person name="Morrison H.G."/>
            <person name="Feng X."/>
            <person name="Weiss L.M."/>
            <person name="Tzipori S."/>
            <person name="Keeling P.J."/>
        </authorList>
    </citation>
    <scope>NUCLEOTIDE SEQUENCE [LARGE SCALE GENOMIC DNA]</scope>
    <source>
        <strain>H348</strain>
    </source>
</reference>
<reference key="2">
    <citation type="journal article" date="2009" name="PLoS Pathog.">
        <title>Genomic survey of the non-cultivatable opportunistic human pathogen, Enterocytozoon bieneusi.</title>
        <authorList>
            <person name="Akiyoshi D.E."/>
            <person name="Morrison H.G."/>
            <person name="Lei S."/>
            <person name="Feng X."/>
            <person name="Zhang Q."/>
            <person name="Corradi N."/>
            <person name="Mayanja H."/>
            <person name="Tumwine J.K."/>
            <person name="Keeling P.J."/>
            <person name="Weiss L.M."/>
            <person name="Tzipori S."/>
        </authorList>
    </citation>
    <scope>NUCLEOTIDE SEQUENCE [LARGE SCALE GENOMIC DNA]</scope>
    <source>
        <strain>H348</strain>
    </source>
</reference>
<proteinExistence type="inferred from homology"/>
<accession>B7XHP6</accession>
<evidence type="ECO:0000250" key="1"/>
<evidence type="ECO:0000305" key="2"/>